<gene>
    <name type="primary">SRO2</name>
    <name type="synonym">CEO3</name>
    <name type="ordered locus">At1g23550</name>
    <name type="ORF">F28C11.18</name>
    <name type="ORF">F5O8.11</name>
</gene>
<proteinExistence type="evidence at protein level"/>
<feature type="chain" id="PRO_0000410420" description="Probable inactive poly [ADP-ribose] polymerase SRO2">
    <location>
        <begin position="1"/>
        <end position="323"/>
    </location>
</feature>
<feature type="domain" description="PARP catalytic" evidence="2">
    <location>
        <begin position="31"/>
        <end position="257"/>
    </location>
</feature>
<feature type="domain" description="RST" evidence="3">
    <location>
        <begin position="250"/>
        <end position="321"/>
    </location>
</feature>
<reference key="1">
    <citation type="journal article" date="2000" name="Nature">
        <title>Sequence and analysis of chromosome 1 of the plant Arabidopsis thaliana.</title>
        <authorList>
            <person name="Theologis A."/>
            <person name="Ecker J.R."/>
            <person name="Palm C.J."/>
            <person name="Federspiel N.A."/>
            <person name="Kaul S."/>
            <person name="White O."/>
            <person name="Alonso J."/>
            <person name="Altafi H."/>
            <person name="Araujo R."/>
            <person name="Bowman C.L."/>
            <person name="Brooks S.Y."/>
            <person name="Buehler E."/>
            <person name="Chan A."/>
            <person name="Chao Q."/>
            <person name="Chen H."/>
            <person name="Cheuk R.F."/>
            <person name="Chin C.W."/>
            <person name="Chung M.K."/>
            <person name="Conn L."/>
            <person name="Conway A.B."/>
            <person name="Conway A.R."/>
            <person name="Creasy T.H."/>
            <person name="Dewar K."/>
            <person name="Dunn P."/>
            <person name="Etgu P."/>
            <person name="Feldblyum T.V."/>
            <person name="Feng J.-D."/>
            <person name="Fong B."/>
            <person name="Fujii C.Y."/>
            <person name="Gill J.E."/>
            <person name="Goldsmith A.D."/>
            <person name="Haas B."/>
            <person name="Hansen N.F."/>
            <person name="Hughes B."/>
            <person name="Huizar L."/>
            <person name="Hunter J.L."/>
            <person name="Jenkins J."/>
            <person name="Johnson-Hopson C."/>
            <person name="Khan S."/>
            <person name="Khaykin E."/>
            <person name="Kim C.J."/>
            <person name="Koo H.L."/>
            <person name="Kremenetskaia I."/>
            <person name="Kurtz D.B."/>
            <person name="Kwan A."/>
            <person name="Lam B."/>
            <person name="Langin-Hooper S."/>
            <person name="Lee A."/>
            <person name="Lee J.M."/>
            <person name="Lenz C.A."/>
            <person name="Li J.H."/>
            <person name="Li Y.-P."/>
            <person name="Lin X."/>
            <person name="Liu S.X."/>
            <person name="Liu Z.A."/>
            <person name="Luros J.S."/>
            <person name="Maiti R."/>
            <person name="Marziali A."/>
            <person name="Militscher J."/>
            <person name="Miranda M."/>
            <person name="Nguyen M."/>
            <person name="Nierman W.C."/>
            <person name="Osborne B.I."/>
            <person name="Pai G."/>
            <person name="Peterson J."/>
            <person name="Pham P.K."/>
            <person name="Rizzo M."/>
            <person name="Rooney T."/>
            <person name="Rowley D."/>
            <person name="Sakano H."/>
            <person name="Salzberg S.L."/>
            <person name="Schwartz J.R."/>
            <person name="Shinn P."/>
            <person name="Southwick A.M."/>
            <person name="Sun H."/>
            <person name="Tallon L.J."/>
            <person name="Tambunga G."/>
            <person name="Toriumi M.J."/>
            <person name="Town C.D."/>
            <person name="Utterback T."/>
            <person name="Van Aken S."/>
            <person name="Vaysberg M."/>
            <person name="Vysotskaia V.S."/>
            <person name="Walker M."/>
            <person name="Wu D."/>
            <person name="Yu G."/>
            <person name="Fraser C.M."/>
            <person name="Venter J.C."/>
            <person name="Davis R.W."/>
        </authorList>
    </citation>
    <scope>NUCLEOTIDE SEQUENCE [LARGE SCALE GENOMIC DNA]</scope>
    <source>
        <strain>cv. Columbia</strain>
    </source>
</reference>
<reference key="2">
    <citation type="journal article" date="2017" name="Plant J.">
        <title>Araport11: a complete reannotation of the Arabidopsis thaliana reference genome.</title>
        <authorList>
            <person name="Cheng C.Y."/>
            <person name="Krishnakumar V."/>
            <person name="Chan A.P."/>
            <person name="Thibaud-Nissen F."/>
            <person name="Schobel S."/>
            <person name="Town C.D."/>
        </authorList>
    </citation>
    <scope>GENOME REANNOTATION</scope>
    <source>
        <strain>cv. Columbia</strain>
    </source>
</reference>
<reference key="3">
    <citation type="submission" date="2005-05" db="EMBL/GenBank/DDBJ databases">
        <title>Arabidopsis ORF clones.</title>
        <authorList>
            <person name="Cheuk R.F."/>
            <person name="Chen H."/>
            <person name="Kim C.J."/>
            <person name="Shinn P."/>
            <person name="Ecker J.R."/>
        </authorList>
    </citation>
    <scope>NUCLEOTIDE SEQUENCE [LARGE SCALE MRNA]</scope>
    <source>
        <strain>cv. Columbia</strain>
    </source>
</reference>
<reference key="4">
    <citation type="journal article" date="2000" name="FEBS Lett.">
        <title>CEO1, a new protein from Arabidopsis thaliana, protects yeast against oxidative damage.</title>
        <authorList>
            <person name="Belles-Boix E."/>
            <person name="Babiychuk E."/>
            <person name="Van Montagu M."/>
            <person name="Inze D."/>
            <person name="Kushnir S."/>
        </authorList>
    </citation>
    <scope>INTERACTION WITH STO</scope>
</reference>
<reference key="5">
    <citation type="journal article" date="2010" name="BMC Genomics">
        <title>The RST and PARP-like domain containing SRO protein family: analysis of protein structure, function and conservation in land plants.</title>
        <authorList>
            <person name="Jaspers P."/>
            <person name="Overmyer K."/>
            <person name="Wrzaczek M."/>
            <person name="Vainonen J.P."/>
            <person name="Blomster T."/>
            <person name="Salojaervi J."/>
            <person name="Reddy R.A."/>
            <person name="Kangasjaervi J."/>
        </authorList>
    </citation>
    <scope>INDUCTION</scope>
</reference>
<dbReference type="EMBL" id="AC005990">
    <property type="protein sequence ID" value="AAC98011.1"/>
    <property type="molecule type" value="Genomic_DNA"/>
</dbReference>
<dbReference type="EMBL" id="AC007945">
    <property type="protein sequence ID" value="AAF79590.1"/>
    <property type="status" value="ALT_SEQ"/>
    <property type="molecule type" value="Genomic_DNA"/>
</dbReference>
<dbReference type="EMBL" id="CP002684">
    <property type="protein sequence ID" value="AEE30402.1"/>
    <property type="molecule type" value="Genomic_DNA"/>
</dbReference>
<dbReference type="EMBL" id="BT022003">
    <property type="protein sequence ID" value="AAY25415.1"/>
    <property type="molecule type" value="mRNA"/>
</dbReference>
<dbReference type="PIR" id="C86369">
    <property type="entry name" value="C86369"/>
</dbReference>
<dbReference type="RefSeq" id="NP_173769.1">
    <property type="nucleotide sequence ID" value="NM_102204.3"/>
</dbReference>
<dbReference type="SMR" id="Q9ZUD9"/>
<dbReference type="FunCoup" id="Q9ZUD9">
    <property type="interactions" value="1"/>
</dbReference>
<dbReference type="STRING" id="3702.Q9ZUD9"/>
<dbReference type="iPTMnet" id="Q9ZUD9"/>
<dbReference type="PaxDb" id="3702-AT1G23550.1"/>
<dbReference type="EnsemblPlants" id="AT1G23550.1">
    <property type="protein sequence ID" value="AT1G23550.1"/>
    <property type="gene ID" value="AT1G23550"/>
</dbReference>
<dbReference type="GeneID" id="838965"/>
<dbReference type="Gramene" id="AT1G23550.1">
    <property type="protein sequence ID" value="AT1G23550.1"/>
    <property type="gene ID" value="AT1G23550"/>
</dbReference>
<dbReference type="KEGG" id="ath:AT1G23550"/>
<dbReference type="Araport" id="AT1G23550"/>
<dbReference type="TAIR" id="AT1G23550">
    <property type="gene designation" value="SRO2"/>
</dbReference>
<dbReference type="eggNOG" id="ENOG502QWND">
    <property type="taxonomic scope" value="Eukaryota"/>
</dbReference>
<dbReference type="HOGENOM" id="CLU_062533_0_0_1"/>
<dbReference type="InParanoid" id="Q9ZUD9"/>
<dbReference type="OMA" id="KIHISMN"/>
<dbReference type="OrthoDB" id="6133115at2759"/>
<dbReference type="PhylomeDB" id="Q9ZUD9"/>
<dbReference type="PRO" id="PR:Q9ZUD9"/>
<dbReference type="Proteomes" id="UP000006548">
    <property type="component" value="Chromosome 1"/>
</dbReference>
<dbReference type="ExpressionAtlas" id="Q9ZUD9">
    <property type="expression patterns" value="baseline and differential"/>
</dbReference>
<dbReference type="GO" id="GO:0005634">
    <property type="term" value="C:nucleus"/>
    <property type="evidence" value="ECO:0007669"/>
    <property type="project" value="UniProtKB-SubCell"/>
</dbReference>
<dbReference type="GO" id="GO:0003950">
    <property type="term" value="F:NAD+ poly-ADP-ribosyltransferase activity"/>
    <property type="evidence" value="ECO:0007669"/>
    <property type="project" value="InterPro"/>
</dbReference>
<dbReference type="Gene3D" id="3.90.228.10">
    <property type="match status" value="1"/>
</dbReference>
<dbReference type="InterPro" id="IPR012317">
    <property type="entry name" value="Poly(ADP-ribose)pol_cat_dom"/>
</dbReference>
<dbReference type="InterPro" id="IPR044964">
    <property type="entry name" value="RCD1/SRO1-5"/>
</dbReference>
<dbReference type="InterPro" id="IPR022003">
    <property type="entry name" value="RST"/>
</dbReference>
<dbReference type="PANTHER" id="PTHR32263:SF14">
    <property type="entry name" value="INACTIVE POLY [ADP-RIBOSE] POLYMERASE SRO2-RELATED"/>
    <property type="match status" value="1"/>
</dbReference>
<dbReference type="PANTHER" id="PTHR32263">
    <property type="entry name" value="INACTIVE POLY [ADP-RIBOSE] POLYMERASE SRO4-RELATED"/>
    <property type="match status" value="1"/>
</dbReference>
<dbReference type="Pfam" id="PF12174">
    <property type="entry name" value="RST"/>
    <property type="match status" value="1"/>
</dbReference>
<dbReference type="SUPFAM" id="SSF56399">
    <property type="entry name" value="ADP-ribosylation"/>
    <property type="match status" value="1"/>
</dbReference>
<dbReference type="PROSITE" id="PS51059">
    <property type="entry name" value="PARP_CATALYTIC"/>
    <property type="match status" value="1"/>
</dbReference>
<dbReference type="PROSITE" id="PS51879">
    <property type="entry name" value="RST"/>
    <property type="match status" value="1"/>
</dbReference>
<comment type="function">
    <text evidence="1">Probable inactive ADP-ribosyltransferase that may be involved in stress and developmental responses.</text>
</comment>
<comment type="subunit">
    <text evidence="4">Interacts with STO.</text>
</comment>
<comment type="subcellular location">
    <subcellularLocation>
        <location evidence="1">Nucleus</location>
    </subcellularLocation>
</comment>
<comment type="induction">
    <text evidence="5">By salt stress and light.</text>
</comment>
<comment type="caution">
    <text evidence="6">Lacks the conserved catalytic triad His-Tyr-Glu of the active site.</text>
</comment>
<comment type="sequence caution" evidence="6">
    <conflict type="erroneous gene model prediction">
        <sequence resource="EMBL-CDS" id="AAF79590"/>
    </conflict>
</comment>
<keyword id="KW-0217">Developmental protein</keyword>
<keyword id="KW-0539">Nucleus</keyword>
<keyword id="KW-1185">Reference proteome</keyword>
<keyword id="KW-0346">Stress response</keyword>
<organism>
    <name type="scientific">Arabidopsis thaliana</name>
    <name type="common">Mouse-ear cress</name>
    <dbReference type="NCBI Taxonomy" id="3702"/>
    <lineage>
        <taxon>Eukaryota</taxon>
        <taxon>Viridiplantae</taxon>
        <taxon>Streptophyta</taxon>
        <taxon>Embryophyta</taxon>
        <taxon>Tracheophyta</taxon>
        <taxon>Spermatophyta</taxon>
        <taxon>Magnoliopsida</taxon>
        <taxon>eudicotyledons</taxon>
        <taxon>Gunneridae</taxon>
        <taxon>Pentapetalae</taxon>
        <taxon>rosids</taxon>
        <taxon>malvids</taxon>
        <taxon>Brassicales</taxon>
        <taxon>Brassicaceae</taxon>
        <taxon>Camelineae</taxon>
        <taxon>Arabidopsis</taxon>
    </lineage>
</organism>
<evidence type="ECO:0000250" key="1"/>
<evidence type="ECO:0000255" key="2">
    <source>
        <dbReference type="PROSITE-ProRule" id="PRU00397"/>
    </source>
</evidence>
<evidence type="ECO:0000255" key="3">
    <source>
        <dbReference type="PROSITE-ProRule" id="PRU01227"/>
    </source>
</evidence>
<evidence type="ECO:0000269" key="4">
    <source>
    </source>
</evidence>
<evidence type="ECO:0000269" key="5">
    <source>
    </source>
</evidence>
<evidence type="ECO:0000305" key="6"/>
<accession>Q9ZUD9</accession>
<accession>Q9LQC4</accession>
<name>SRO2_ARATH</name>
<sequence>MAAQVEIEDQTSVTNLDNGEIFDSISDDADSSVSHAGSSFSSSSLILLGEGNPEHDVIKTCLLSGMGVVSSDTTIVTISKNSSERGITTRAKFLAFRIFTDAVARKHGGDANVKYGWYAGSRDEIQRIISYGFSNRDVGKFENDGGSHGIGIHLVPSKCSLLAASATEQDEEGLRYLLLCRVILGKPEIIISGSKQSYPSSAEFDSGVDDLHNPRNYVIWSCNMNSCILPSYIVSFRSPRLRVSRGGFASRPSSPWVSFASLMSMLSTSMDPSRMNLIIRTYDDFRKRKIRRDQLVRKMREVAGDNLLAEIIKNHKNRNKVTN</sequence>
<protein>
    <recommendedName>
        <fullName>Probable inactive poly [ADP-ribose] polymerase SRO2</fullName>
    </recommendedName>
    <alternativeName>
        <fullName>Protein SIMILAR TO RCD ONE 2</fullName>
    </alternativeName>
</protein>